<keyword id="KW-0687">Ribonucleoprotein</keyword>
<keyword id="KW-0689">Ribosomal protein</keyword>
<keyword id="KW-0694">RNA-binding</keyword>
<keyword id="KW-0699">rRNA-binding</keyword>
<protein>
    <recommendedName>
        <fullName evidence="1">Large ribosomal subunit protein uL23</fullName>
    </recommendedName>
    <alternativeName>
        <fullName evidence="2">50S ribosomal protein L23</fullName>
    </alternativeName>
</protein>
<dbReference type="EMBL" id="CP000553">
    <property type="protein sequence ID" value="ABM76557.1"/>
    <property type="molecule type" value="Genomic_DNA"/>
</dbReference>
<dbReference type="RefSeq" id="WP_011295471.1">
    <property type="nucleotide sequence ID" value="NC_008819.1"/>
</dbReference>
<dbReference type="SMR" id="A2C4Z7"/>
<dbReference type="KEGG" id="pme:NATL1_20011"/>
<dbReference type="eggNOG" id="COG0089">
    <property type="taxonomic scope" value="Bacteria"/>
</dbReference>
<dbReference type="HOGENOM" id="CLU_037562_3_2_3"/>
<dbReference type="Proteomes" id="UP000002592">
    <property type="component" value="Chromosome"/>
</dbReference>
<dbReference type="GO" id="GO:1990904">
    <property type="term" value="C:ribonucleoprotein complex"/>
    <property type="evidence" value="ECO:0007669"/>
    <property type="project" value="UniProtKB-KW"/>
</dbReference>
<dbReference type="GO" id="GO:0005840">
    <property type="term" value="C:ribosome"/>
    <property type="evidence" value="ECO:0007669"/>
    <property type="project" value="UniProtKB-KW"/>
</dbReference>
<dbReference type="GO" id="GO:0019843">
    <property type="term" value="F:rRNA binding"/>
    <property type="evidence" value="ECO:0007669"/>
    <property type="project" value="UniProtKB-UniRule"/>
</dbReference>
<dbReference type="GO" id="GO:0003735">
    <property type="term" value="F:structural constituent of ribosome"/>
    <property type="evidence" value="ECO:0007669"/>
    <property type="project" value="InterPro"/>
</dbReference>
<dbReference type="GO" id="GO:0006412">
    <property type="term" value="P:translation"/>
    <property type="evidence" value="ECO:0007669"/>
    <property type="project" value="UniProtKB-UniRule"/>
</dbReference>
<dbReference type="FunFam" id="3.30.70.330:FF:000001">
    <property type="entry name" value="50S ribosomal protein L23"/>
    <property type="match status" value="1"/>
</dbReference>
<dbReference type="Gene3D" id="3.30.70.330">
    <property type="match status" value="1"/>
</dbReference>
<dbReference type="HAMAP" id="MF_01369_B">
    <property type="entry name" value="Ribosomal_uL23_B"/>
    <property type="match status" value="1"/>
</dbReference>
<dbReference type="InterPro" id="IPR012677">
    <property type="entry name" value="Nucleotide-bd_a/b_plait_sf"/>
</dbReference>
<dbReference type="InterPro" id="IPR013025">
    <property type="entry name" value="Ribosomal_uL23-like"/>
</dbReference>
<dbReference type="InterPro" id="IPR012678">
    <property type="entry name" value="Ribosomal_uL23/eL15/eS24_sf"/>
</dbReference>
<dbReference type="InterPro" id="IPR001014">
    <property type="entry name" value="Ribosomal_uL23_CS"/>
</dbReference>
<dbReference type="NCBIfam" id="NF004359">
    <property type="entry name" value="PRK05738.1-3"/>
    <property type="match status" value="1"/>
</dbReference>
<dbReference type="NCBIfam" id="NF004363">
    <property type="entry name" value="PRK05738.2-4"/>
    <property type="match status" value="1"/>
</dbReference>
<dbReference type="NCBIfam" id="NF004365">
    <property type="entry name" value="PRK05738.3-1"/>
    <property type="match status" value="1"/>
</dbReference>
<dbReference type="NCBIfam" id="NF004366">
    <property type="entry name" value="PRK05738.3-2"/>
    <property type="match status" value="1"/>
</dbReference>
<dbReference type="NCBIfam" id="NF004368">
    <property type="entry name" value="PRK05738.3-4"/>
    <property type="match status" value="1"/>
</dbReference>
<dbReference type="PANTHER" id="PTHR11620">
    <property type="entry name" value="60S RIBOSOMAL PROTEIN L23A"/>
    <property type="match status" value="1"/>
</dbReference>
<dbReference type="Pfam" id="PF00276">
    <property type="entry name" value="Ribosomal_L23"/>
    <property type="match status" value="1"/>
</dbReference>
<dbReference type="SUPFAM" id="SSF54189">
    <property type="entry name" value="Ribosomal proteins S24e, L23 and L15e"/>
    <property type="match status" value="1"/>
</dbReference>
<dbReference type="PROSITE" id="PS00050">
    <property type="entry name" value="RIBOSOMAL_L23"/>
    <property type="match status" value="1"/>
</dbReference>
<feature type="chain" id="PRO_1000068133" description="Large ribosomal subunit protein uL23">
    <location>
        <begin position="1"/>
        <end position="103"/>
    </location>
</feature>
<accession>A2C4Z7</accession>
<reference key="1">
    <citation type="journal article" date="2007" name="PLoS Genet.">
        <title>Patterns and implications of gene gain and loss in the evolution of Prochlorococcus.</title>
        <authorList>
            <person name="Kettler G.C."/>
            <person name="Martiny A.C."/>
            <person name="Huang K."/>
            <person name="Zucker J."/>
            <person name="Coleman M.L."/>
            <person name="Rodrigue S."/>
            <person name="Chen F."/>
            <person name="Lapidus A."/>
            <person name="Ferriera S."/>
            <person name="Johnson J."/>
            <person name="Steglich C."/>
            <person name="Church G.M."/>
            <person name="Richardson P."/>
            <person name="Chisholm S.W."/>
        </authorList>
    </citation>
    <scope>NUCLEOTIDE SEQUENCE [LARGE SCALE GENOMIC DNA]</scope>
    <source>
        <strain>NATL1A</strain>
    </source>
</reference>
<comment type="function">
    <text evidence="1">One of the early assembly proteins it binds 23S rRNA. One of the proteins that surrounds the polypeptide exit tunnel on the outside of the ribosome. Forms the main docking site for trigger factor binding to the ribosome.</text>
</comment>
<comment type="subunit">
    <text evidence="1">Part of the 50S ribosomal subunit. Contacts protein L29, and trigger factor when it is bound to the ribosome.</text>
</comment>
<comment type="similarity">
    <text evidence="1">Belongs to the universal ribosomal protein uL23 family.</text>
</comment>
<gene>
    <name evidence="1" type="primary">rplW</name>
    <name evidence="1" type="synonym">rpl23</name>
    <name type="ordered locus">NATL1_20011</name>
</gene>
<name>RL23_PROM1</name>
<proteinExistence type="inferred from homology"/>
<evidence type="ECO:0000255" key="1">
    <source>
        <dbReference type="HAMAP-Rule" id="MF_01369"/>
    </source>
</evidence>
<evidence type="ECO:0000305" key="2"/>
<sequence length="103" mass="11705">MTKFFEKRLTDVIKRPLITEKATKALDLNQYTFEVDPRAAKPDIKAAVEKMFDVKVLGISTMNPPRKSRRVGRFSGKRPQVKKAVVRLAEGNSIQLFPESEEA</sequence>
<organism>
    <name type="scientific">Prochlorococcus marinus (strain NATL1A)</name>
    <dbReference type="NCBI Taxonomy" id="167555"/>
    <lineage>
        <taxon>Bacteria</taxon>
        <taxon>Bacillati</taxon>
        <taxon>Cyanobacteriota</taxon>
        <taxon>Cyanophyceae</taxon>
        <taxon>Synechococcales</taxon>
        <taxon>Prochlorococcaceae</taxon>
        <taxon>Prochlorococcus</taxon>
    </lineage>
</organism>